<dbReference type="EMBL" id="X12647">
    <property type="protein sequence ID" value="CAA31177.1"/>
    <property type="molecule type" value="Genomic_DNA"/>
</dbReference>
<dbReference type="EMBL" id="M36703">
    <property type="protein sequence ID" value="AAA23146.1"/>
    <property type="molecule type" value="Genomic_DNA"/>
</dbReference>
<dbReference type="PIR" id="S05954">
    <property type="entry name" value="MMCWPM"/>
</dbReference>
<dbReference type="RefSeq" id="WP_014947003.1">
    <property type="nucleotide sequence ID" value="NZ_JACAAQ010000030.1"/>
</dbReference>
<dbReference type="STRING" id="331636.G5O_0062"/>
<dbReference type="TCDB" id="1.B.2.1.1">
    <property type="family name" value="the chlamydial porin (cp) family"/>
</dbReference>
<dbReference type="eggNOG" id="ENOG502ZVFZ">
    <property type="taxonomic scope" value="Bacteria"/>
</dbReference>
<dbReference type="GO" id="GO:0009279">
    <property type="term" value="C:cell outer membrane"/>
    <property type="evidence" value="ECO:0007669"/>
    <property type="project" value="UniProtKB-SubCell"/>
</dbReference>
<dbReference type="GO" id="GO:0046930">
    <property type="term" value="C:pore complex"/>
    <property type="evidence" value="ECO:0007669"/>
    <property type="project" value="UniProtKB-KW"/>
</dbReference>
<dbReference type="GO" id="GO:0015288">
    <property type="term" value="F:porin activity"/>
    <property type="evidence" value="ECO:0007669"/>
    <property type="project" value="UniProtKB-KW"/>
</dbReference>
<dbReference type="GO" id="GO:0005198">
    <property type="term" value="F:structural molecule activity"/>
    <property type="evidence" value="ECO:0007669"/>
    <property type="project" value="InterPro"/>
</dbReference>
<dbReference type="GO" id="GO:0006811">
    <property type="term" value="P:monoatomic ion transport"/>
    <property type="evidence" value="ECO:0007669"/>
    <property type="project" value="UniProtKB-KW"/>
</dbReference>
<dbReference type="InterPro" id="IPR000604">
    <property type="entry name" value="Major_OMP_Chlamydia"/>
</dbReference>
<dbReference type="Pfam" id="PF01308">
    <property type="entry name" value="Chlam_OMP"/>
    <property type="match status" value="1"/>
</dbReference>
<dbReference type="PRINTS" id="PR01334">
    <property type="entry name" value="CHLAMIDIAOMP"/>
</dbReference>
<organism>
    <name type="scientific">Chlamydia psittaci</name>
    <name type="common">Chlamydophila psittaci</name>
    <dbReference type="NCBI Taxonomy" id="83554"/>
    <lineage>
        <taxon>Bacteria</taxon>
        <taxon>Pseudomonadati</taxon>
        <taxon>Chlamydiota</taxon>
        <taxon>Chlamydiia</taxon>
        <taxon>Chlamydiales</taxon>
        <taxon>Chlamydiaceae</taxon>
        <taxon>Chlamydia/Chlamydophila group</taxon>
        <taxon>Chlamydia</taxon>
    </lineage>
</organism>
<name>MOMPA_CHLPS</name>
<feature type="signal peptide" evidence="2">
    <location>
        <begin position="1"/>
        <end position="22"/>
    </location>
</feature>
<feature type="chain" id="PRO_0000020142" description="Major outer membrane porin">
    <location>
        <begin position="23"/>
        <end position="402"/>
    </location>
</feature>
<protein>
    <recommendedName>
        <fullName>Major outer membrane porin</fullName>
        <shortName>MOMP</shortName>
    </recommendedName>
</protein>
<proteinExistence type="evidence at transcript level"/>
<gene>
    <name type="primary">ompA</name>
    <name type="synonym">omp1</name>
</gene>
<reference key="1">
    <citation type="journal article" date="1988" name="FEMS Microbiol. Lett.">
        <title>Chlamydia psittaci ewe abortion agent: complete nucleotide sequence of the major outer membrane protein gene.</title>
        <authorList>
            <person name="Pickett M.A."/>
            <person name="Everson S.J."/>
            <person name="Clarke I.N."/>
        </authorList>
        <dbReference type="AGRICOLA" id="IND89005865"/>
    </citation>
    <scope>NUCLEOTIDE SEQUENCE [GENOMIC DNA]</scope>
    <source>
        <strain>A22/M</strain>
    </source>
</reference>
<keyword id="KW-0998">Cell outer membrane</keyword>
<keyword id="KW-1015">Disulfide bond</keyword>
<keyword id="KW-0406">Ion transport</keyword>
<keyword id="KW-0472">Membrane</keyword>
<keyword id="KW-0626">Porin</keyword>
<keyword id="KW-0732">Signal</keyword>
<keyword id="KW-0812">Transmembrane</keyword>
<keyword id="KW-1134">Transmembrane beta strand</keyword>
<keyword id="KW-0813">Transport</keyword>
<evidence type="ECO:0000250" key="1"/>
<evidence type="ECO:0000255" key="2"/>
<evidence type="ECO:0000305" key="3"/>
<sequence length="402" mass="43277">MKKLLKSALLFAATGSALSLQALPVGNPAEPSLLIDGTMWEGASGDPCDPCATWCDAISIRAGYYGDYVFDRVLKVDVNKTFSGMAATPTQATGNASNTNQPEANGRPNIAYGRHMQDAEWFSNAAFLALNIWDRFDIFCTLGASNGYFKSSSAAFNLVGLIGFSATSSTSTELPMQLPNVGITQGVVEFYTDTSFSWSVGARGALWECGCATLGAEFQYAQSNPKIEVLNVTSSPAQFVIHKPRGYKGASSNFPLPITAGTTEATDTKSATIKYHEWQVGLALSYRLNMLVPYIGVNWSRATFDADTIRIAQPKLKSEILNITTWNPSLLGSTTTLPNNGGKDVLSDVLQIASIQINKMKSRKACGVAVGATLIDADKWSITGEARLINERAAHMNAQFRF</sequence>
<accession>P10332</accession>
<comment type="function">
    <text evidence="1">In elementary bodies (EBs, the infectious stage, which is able to survive outside the host cell) provides the structural integrity of the outer envelope through disulfide cross-links with the small cysteine-rich protein and the large cysteine-rich periplasmic protein. It has been described in publications as the Sarkosyl-insoluble COMC (Chlamydia outer membrane complex), and serves as the functional equivalent of peptidoglycan (By similarity).</text>
</comment>
<comment type="function">
    <text evidence="1">Permits diffusion of specific solutes through the outer membrane.</text>
</comment>
<comment type="subunit">
    <text evidence="1">Part of a disulfide cross-linked outer membrane complex (COMC) composed of the major outer membrane porin, the small cysteine-rich protein (OmcA) and the large cysteine-rich periplasmic protein (OmcB).</text>
</comment>
<comment type="subcellular location">
    <subcellularLocation>
        <location evidence="3">Cell outer membrane</location>
        <topology evidence="3">Multi-pass membrane protein</topology>
    </subcellularLocation>
</comment>
<comment type="developmental stage">
    <text>It is present but some of the disulfide bonds are reduced in the intracellular reticulate bodies (RBs).</text>
</comment>
<comment type="similarity">
    <text evidence="3">Belongs to the chlamydial porin (CP) (TC 1.B.2) family.</text>
</comment>